<proteinExistence type="evidence at protein level"/>
<feature type="chain" id="PRO_0000056956" description="NAD-capped RNA hydrolase NUDT12">
    <location>
        <begin position="1"/>
        <end position="462"/>
    </location>
</feature>
<feature type="repeat" description="ANK 1">
    <location>
        <begin position="11"/>
        <end position="40"/>
    </location>
</feature>
<feature type="repeat" description="ANK 2">
    <location>
        <begin position="45"/>
        <end position="74"/>
    </location>
</feature>
<feature type="repeat" description="ANK 3">
    <location>
        <begin position="78"/>
        <end position="98"/>
    </location>
</feature>
<feature type="domain" description="Nudix hydrolase" evidence="2">
    <location>
        <begin position="319"/>
        <end position="453"/>
    </location>
</feature>
<feature type="short sequence motif" description="Nudix box">
    <location>
        <begin position="355"/>
        <end position="376"/>
    </location>
</feature>
<feature type="short sequence motif" description="Microbody targeting signal" evidence="8">
    <location>
        <begin position="460"/>
        <end position="462"/>
    </location>
</feature>
<feature type="binding site" evidence="9 11">
    <location>
        <position position="284"/>
    </location>
    <ligand>
        <name>Zn(2+)</name>
        <dbReference type="ChEBI" id="CHEBI:29105"/>
    </ligand>
</feature>
<feature type="binding site" evidence="9 11">
    <location>
        <position position="287"/>
    </location>
    <ligand>
        <name>Zn(2+)</name>
        <dbReference type="ChEBI" id="CHEBI:29105"/>
    </ligand>
</feature>
<feature type="binding site" evidence="9 11">
    <location>
        <position position="302"/>
    </location>
    <ligand>
        <name>Zn(2+)</name>
        <dbReference type="ChEBI" id="CHEBI:29105"/>
    </ligand>
</feature>
<feature type="binding site" evidence="9 11">
    <location>
        <position position="307"/>
    </location>
    <ligand>
        <name>Zn(2+)</name>
        <dbReference type="ChEBI" id="CHEBI:29105"/>
    </ligand>
</feature>
<feature type="binding site" evidence="1">
    <location>
        <position position="318"/>
    </location>
    <ligand>
        <name>substrate</name>
    </ligand>
</feature>
<feature type="binding site" evidence="1">
    <location>
        <begin position="354"/>
        <end position="356"/>
    </location>
    <ligand>
        <name>substrate</name>
    </ligand>
</feature>
<feature type="binding site" evidence="1">
    <location>
        <position position="354"/>
    </location>
    <ligand>
        <name>Mg(2+)</name>
        <dbReference type="ChEBI" id="CHEBI:18420"/>
        <label>1</label>
    </ligand>
</feature>
<feature type="binding site" evidence="9 11">
    <location>
        <position position="370"/>
    </location>
    <ligand>
        <name>Mg(2+)</name>
        <dbReference type="ChEBI" id="CHEBI:18420"/>
        <label>2</label>
    </ligand>
</feature>
<feature type="binding site" evidence="9 11">
    <location>
        <position position="370"/>
    </location>
    <ligand>
        <name>Mg(2+)</name>
        <dbReference type="ChEBI" id="CHEBI:18420"/>
        <label>3</label>
    </ligand>
</feature>
<feature type="binding site" evidence="1">
    <location>
        <position position="370"/>
    </location>
    <ligand>
        <name>substrate</name>
    </ligand>
</feature>
<feature type="binding site" evidence="9 11">
    <location>
        <position position="374"/>
    </location>
    <ligand>
        <name>Mg(2+)</name>
        <dbReference type="ChEBI" id="CHEBI:18420"/>
        <label>1</label>
    </ligand>
</feature>
<feature type="binding site" evidence="9 11">
    <location>
        <position position="374"/>
    </location>
    <ligand>
        <name>Mg(2+)</name>
        <dbReference type="ChEBI" id="CHEBI:18420"/>
        <label>3</label>
    </ligand>
</feature>
<feature type="binding site" evidence="1">
    <location>
        <position position="374"/>
    </location>
    <ligand>
        <name>substrate</name>
    </ligand>
</feature>
<feature type="binding site" evidence="9 11">
    <location>
        <position position="415"/>
    </location>
    <ligand>
        <name>Mg(2+)</name>
        <dbReference type="ChEBI" id="CHEBI:18420"/>
        <label>1</label>
    </ligand>
</feature>
<feature type="binding site" evidence="9 11">
    <location>
        <position position="415"/>
    </location>
    <ligand>
        <name>Mg(2+)</name>
        <dbReference type="ChEBI" id="CHEBI:18420"/>
        <label>3</label>
    </ligand>
</feature>
<feature type="binding site" evidence="1">
    <location>
        <position position="415"/>
    </location>
    <ligand>
        <name>substrate</name>
    </ligand>
</feature>
<feature type="modified residue" description="N6-succinyllysine" evidence="1">
    <location>
        <position position="185"/>
    </location>
</feature>
<feature type="modified residue" description="N6-succinyllysine" evidence="1">
    <location>
        <position position="292"/>
    </location>
</feature>
<feature type="splice variant" id="VSP_060395" description="In isoform 2.">
    <location>
        <begin position="52"/>
        <end position="69"/>
    </location>
</feature>
<feature type="sequence variant" id="VAR_034157" description="In dbSNP:rs35903418.">
    <original>K</original>
    <variation>E</variation>
    <location>
        <position position="129"/>
    </location>
</feature>
<feature type="sequence variant" id="VAR_034158" description="In dbSNP:rs34468716.">
    <original>I</original>
    <variation>V</variation>
    <location>
        <position position="235"/>
    </location>
</feature>
<feature type="mutagenesis site" description="Loss of homodimerization; when associated with A-283; A-284; A-287 and A-384." evidence="5">
    <original>Y</original>
    <variation>A</variation>
    <location>
        <position position="281"/>
    </location>
</feature>
<feature type="mutagenesis site" description="Loss of homodimerization; when associated with A-281; A-284; A-287 and A-384." evidence="5">
    <original>F</original>
    <variation>A</variation>
    <location>
        <position position="283"/>
    </location>
</feature>
<feature type="mutagenesis site" description="Loss of homodimerization; when associated with A-281; A-283; A-287 and A-384." evidence="5">
    <original>C</original>
    <variation>A</variation>
    <location>
        <position position="284"/>
    </location>
</feature>
<feature type="mutagenesis site" description="Loss of homodimerization; when associated with A-281; A-283; A-284 and A-384." evidence="5">
    <original>C</original>
    <variation>A</variation>
    <location>
        <position position="287"/>
    </location>
</feature>
<feature type="mutagenesis site" description="Partial loss of decapping activity towards NAD-capped RNAs." evidence="5">
    <original>Y</original>
    <variation>A</variation>
    <location>
        <position position="318"/>
    </location>
</feature>
<feature type="mutagenesis site" description="Loss of decapping activity towards NAD-capped RNAs." evidence="5">
    <original>F</original>
    <variation>A</variation>
    <location>
        <position position="356"/>
    </location>
</feature>
<feature type="mutagenesis site" description="Loss of decapping activity towards NAD-capped RNAs." evidence="5">
    <original>E</original>
    <variation>Q</variation>
    <location>
        <position position="370"/>
    </location>
</feature>
<feature type="mutagenesis site" description="Loss of decapping activity towards NAD-capped RNAs." evidence="5">
    <original>E</original>
    <variation>Q</variation>
    <location>
        <position position="374"/>
    </location>
</feature>
<feature type="mutagenesis site" description="No effect on decapping activity towards NAD-capped RNAs. Loss of homodimerization; when associated with A-281; A-283; A-284 and A-287." evidence="5">
    <original>Y</original>
    <variation>A</variation>
    <location>
        <position position="384"/>
    </location>
</feature>
<feature type="mutagenesis site" description="Partial loss of decapping activity towards NAD-capped RNAs." evidence="5">
    <original>W</original>
    <variation>A</variation>
    <location>
        <position position="390"/>
    </location>
</feature>
<feature type="mutagenesis site" description="Abolishes localization to peroxisomes." evidence="3">
    <location>
        <begin position="460"/>
        <end position="462"/>
    </location>
</feature>
<feature type="sequence conflict" description="In Ref. 2; BAG64925." evidence="7" ref="2">
    <original>A</original>
    <variation>V</variation>
    <location>
        <position position="82"/>
    </location>
</feature>
<feature type="strand" evidence="12">
    <location>
        <begin position="125"/>
        <end position="127"/>
    </location>
</feature>
<feature type="helix" evidence="12">
    <location>
        <begin position="130"/>
        <end position="134"/>
    </location>
</feature>
<feature type="helix" evidence="12">
    <location>
        <begin position="136"/>
        <end position="144"/>
    </location>
</feature>
<feature type="strand" evidence="12">
    <location>
        <begin position="149"/>
        <end position="154"/>
    </location>
</feature>
<feature type="strand" evidence="12">
    <location>
        <begin position="157"/>
        <end position="162"/>
    </location>
</feature>
<feature type="strand" evidence="12">
    <location>
        <begin position="174"/>
        <end position="176"/>
    </location>
</feature>
<feature type="helix" evidence="12">
    <location>
        <begin position="181"/>
        <end position="188"/>
    </location>
</feature>
<feature type="strand" evidence="12">
    <location>
        <begin position="195"/>
        <end position="202"/>
    </location>
</feature>
<feature type="strand" evidence="12">
    <location>
        <begin position="226"/>
        <end position="232"/>
    </location>
</feature>
<feature type="helix" evidence="12">
    <location>
        <begin position="234"/>
        <end position="244"/>
    </location>
</feature>
<feature type="helix" evidence="12">
    <location>
        <begin position="253"/>
        <end position="256"/>
    </location>
</feature>
<feature type="helix" evidence="12">
    <location>
        <begin position="257"/>
        <end position="259"/>
    </location>
</feature>
<feature type="helix" evidence="12">
    <location>
        <begin position="262"/>
        <end position="280"/>
    </location>
</feature>
<feature type="turn" evidence="12">
    <location>
        <begin position="285"/>
        <end position="287"/>
    </location>
</feature>
<feature type="strand" evidence="12">
    <location>
        <begin position="290"/>
        <end position="294"/>
    </location>
</feature>
<feature type="turn" evidence="12">
    <location>
        <begin position="295"/>
        <end position="298"/>
    </location>
</feature>
<feature type="strand" evidence="12">
    <location>
        <begin position="299"/>
        <end position="302"/>
    </location>
</feature>
<feature type="helix" evidence="12">
    <location>
        <begin position="308"/>
        <end position="310"/>
    </location>
</feature>
<feature type="helix" evidence="12">
    <location>
        <begin position="315"/>
        <end position="317"/>
    </location>
</feature>
<feature type="strand" evidence="12">
    <location>
        <begin position="323"/>
        <end position="330"/>
    </location>
</feature>
<feature type="strand" evidence="12">
    <location>
        <begin position="334"/>
        <end position="341"/>
    </location>
</feature>
<feature type="strand" evidence="12">
    <location>
        <begin position="343"/>
        <end position="345"/>
    </location>
</feature>
<feature type="strand" evidence="12">
    <location>
        <begin position="353"/>
        <end position="356"/>
    </location>
</feature>
<feature type="helix" evidence="12">
    <location>
        <begin position="363"/>
        <end position="375"/>
    </location>
</feature>
<feature type="strand" evidence="12">
    <location>
        <begin position="379"/>
        <end position="389"/>
    </location>
</feature>
<feature type="strand" evidence="12">
    <location>
        <begin position="392"/>
        <end position="394"/>
    </location>
</feature>
<feature type="strand" evidence="12">
    <location>
        <begin position="396"/>
        <end position="405"/>
    </location>
</feature>
<feature type="strand" evidence="12">
    <location>
        <begin position="413"/>
        <end position="415"/>
    </location>
</feature>
<feature type="strand" evidence="12">
    <location>
        <begin position="417"/>
        <end position="423"/>
    </location>
</feature>
<feature type="helix" evidence="12">
    <location>
        <begin position="424"/>
        <end position="431"/>
    </location>
</feature>
<feature type="helix" evidence="12">
    <location>
        <begin position="447"/>
        <end position="458"/>
    </location>
</feature>
<reference key="1">
    <citation type="journal article" date="2001" name="Genome Res.">
        <title>Towards a catalog of human genes and proteins: sequencing and analysis of 500 novel complete protein coding human cDNAs.</title>
        <authorList>
            <person name="Wiemann S."/>
            <person name="Weil B."/>
            <person name="Wellenreuther R."/>
            <person name="Gassenhuber J."/>
            <person name="Glassl S."/>
            <person name="Ansorge W."/>
            <person name="Boecher M."/>
            <person name="Bloecker H."/>
            <person name="Bauersachs S."/>
            <person name="Blum H."/>
            <person name="Lauber J."/>
            <person name="Duesterhoeft A."/>
            <person name="Beyer A."/>
            <person name="Koehrer K."/>
            <person name="Strack N."/>
            <person name="Mewes H.-W."/>
            <person name="Ottenwaelder B."/>
            <person name="Obermaier B."/>
            <person name="Tampe J."/>
            <person name="Heubner D."/>
            <person name="Wambutt R."/>
            <person name="Korn B."/>
            <person name="Klein M."/>
            <person name="Poustka A."/>
        </authorList>
    </citation>
    <scope>NUCLEOTIDE SEQUENCE [LARGE SCALE MRNA] (ISOFORM 1)</scope>
    <source>
        <tissue>Amygdala</tissue>
    </source>
</reference>
<reference key="2">
    <citation type="journal article" date="2004" name="Nat. Genet.">
        <title>Complete sequencing and characterization of 21,243 full-length human cDNAs.</title>
        <authorList>
            <person name="Ota T."/>
            <person name="Suzuki Y."/>
            <person name="Nishikawa T."/>
            <person name="Otsuki T."/>
            <person name="Sugiyama T."/>
            <person name="Irie R."/>
            <person name="Wakamatsu A."/>
            <person name="Hayashi K."/>
            <person name="Sato H."/>
            <person name="Nagai K."/>
            <person name="Kimura K."/>
            <person name="Makita H."/>
            <person name="Sekine M."/>
            <person name="Obayashi M."/>
            <person name="Nishi T."/>
            <person name="Shibahara T."/>
            <person name="Tanaka T."/>
            <person name="Ishii S."/>
            <person name="Yamamoto J."/>
            <person name="Saito K."/>
            <person name="Kawai Y."/>
            <person name="Isono Y."/>
            <person name="Nakamura Y."/>
            <person name="Nagahari K."/>
            <person name="Murakami K."/>
            <person name="Yasuda T."/>
            <person name="Iwayanagi T."/>
            <person name="Wagatsuma M."/>
            <person name="Shiratori A."/>
            <person name="Sudo H."/>
            <person name="Hosoiri T."/>
            <person name="Kaku Y."/>
            <person name="Kodaira H."/>
            <person name="Kondo H."/>
            <person name="Sugawara M."/>
            <person name="Takahashi M."/>
            <person name="Kanda K."/>
            <person name="Yokoi T."/>
            <person name="Furuya T."/>
            <person name="Kikkawa E."/>
            <person name="Omura Y."/>
            <person name="Abe K."/>
            <person name="Kamihara K."/>
            <person name="Katsuta N."/>
            <person name="Sato K."/>
            <person name="Tanikawa M."/>
            <person name="Yamazaki M."/>
            <person name="Ninomiya K."/>
            <person name="Ishibashi T."/>
            <person name="Yamashita H."/>
            <person name="Murakawa K."/>
            <person name="Fujimori K."/>
            <person name="Tanai H."/>
            <person name="Kimata M."/>
            <person name="Watanabe M."/>
            <person name="Hiraoka S."/>
            <person name="Chiba Y."/>
            <person name="Ishida S."/>
            <person name="Ono Y."/>
            <person name="Takiguchi S."/>
            <person name="Watanabe S."/>
            <person name="Yosida M."/>
            <person name="Hotuta T."/>
            <person name="Kusano J."/>
            <person name="Kanehori K."/>
            <person name="Takahashi-Fujii A."/>
            <person name="Hara H."/>
            <person name="Tanase T.-O."/>
            <person name="Nomura Y."/>
            <person name="Togiya S."/>
            <person name="Komai F."/>
            <person name="Hara R."/>
            <person name="Takeuchi K."/>
            <person name="Arita M."/>
            <person name="Imose N."/>
            <person name="Musashino K."/>
            <person name="Yuuki H."/>
            <person name="Oshima A."/>
            <person name="Sasaki N."/>
            <person name="Aotsuka S."/>
            <person name="Yoshikawa Y."/>
            <person name="Matsunawa H."/>
            <person name="Ichihara T."/>
            <person name="Shiohata N."/>
            <person name="Sano S."/>
            <person name="Moriya S."/>
            <person name="Momiyama H."/>
            <person name="Satoh N."/>
            <person name="Takami S."/>
            <person name="Terashima Y."/>
            <person name="Suzuki O."/>
            <person name="Nakagawa S."/>
            <person name="Senoh A."/>
            <person name="Mizoguchi H."/>
            <person name="Goto Y."/>
            <person name="Shimizu F."/>
            <person name="Wakebe H."/>
            <person name="Hishigaki H."/>
            <person name="Watanabe T."/>
            <person name="Sugiyama A."/>
            <person name="Takemoto M."/>
            <person name="Kawakami B."/>
            <person name="Yamazaki M."/>
            <person name="Watanabe K."/>
            <person name="Kumagai A."/>
            <person name="Itakura S."/>
            <person name="Fukuzumi Y."/>
            <person name="Fujimori Y."/>
            <person name="Komiyama M."/>
            <person name="Tashiro H."/>
            <person name="Tanigami A."/>
            <person name="Fujiwara T."/>
            <person name="Ono T."/>
            <person name="Yamada K."/>
            <person name="Fujii Y."/>
            <person name="Ozaki K."/>
            <person name="Hirao M."/>
            <person name="Ohmori Y."/>
            <person name="Kawabata A."/>
            <person name="Hikiji T."/>
            <person name="Kobatake N."/>
            <person name="Inagaki H."/>
            <person name="Ikema Y."/>
            <person name="Okamoto S."/>
            <person name="Okitani R."/>
            <person name="Kawakami T."/>
            <person name="Noguchi S."/>
            <person name="Itoh T."/>
            <person name="Shigeta K."/>
            <person name="Senba T."/>
            <person name="Matsumura K."/>
            <person name="Nakajima Y."/>
            <person name="Mizuno T."/>
            <person name="Morinaga M."/>
            <person name="Sasaki M."/>
            <person name="Togashi T."/>
            <person name="Oyama M."/>
            <person name="Hata H."/>
            <person name="Watanabe M."/>
            <person name="Komatsu T."/>
            <person name="Mizushima-Sugano J."/>
            <person name="Satoh T."/>
            <person name="Shirai Y."/>
            <person name="Takahashi Y."/>
            <person name="Nakagawa K."/>
            <person name="Okumura K."/>
            <person name="Nagase T."/>
            <person name="Nomura N."/>
            <person name="Kikuchi H."/>
            <person name="Masuho Y."/>
            <person name="Yamashita R."/>
            <person name="Nakai K."/>
            <person name="Yada T."/>
            <person name="Nakamura Y."/>
            <person name="Ohara O."/>
            <person name="Isogai T."/>
            <person name="Sugano S."/>
        </authorList>
    </citation>
    <scope>NUCLEOTIDE SEQUENCE [LARGE SCALE MRNA] (ISOFORMS 1 AND 2)</scope>
    <source>
        <tissue>Trachea</tissue>
    </source>
</reference>
<reference key="3">
    <citation type="submission" date="2005-09" db="EMBL/GenBank/DDBJ databases">
        <authorList>
            <person name="Mural R.J."/>
            <person name="Istrail S."/>
            <person name="Sutton G.G."/>
            <person name="Florea L."/>
            <person name="Halpern A.L."/>
            <person name="Mobarry C.M."/>
            <person name="Lippert R."/>
            <person name="Walenz B."/>
            <person name="Shatkay H."/>
            <person name="Dew I."/>
            <person name="Miller J.R."/>
            <person name="Flanigan M.J."/>
            <person name="Edwards N.J."/>
            <person name="Bolanos R."/>
            <person name="Fasulo D."/>
            <person name="Halldorsson B.V."/>
            <person name="Hannenhalli S."/>
            <person name="Turner R."/>
            <person name="Yooseph S."/>
            <person name="Lu F."/>
            <person name="Nusskern D.R."/>
            <person name="Shue B.C."/>
            <person name="Zheng X.H."/>
            <person name="Zhong F."/>
            <person name="Delcher A.L."/>
            <person name="Huson D.H."/>
            <person name="Kravitz S.A."/>
            <person name="Mouchard L."/>
            <person name="Reinert K."/>
            <person name="Remington K.A."/>
            <person name="Clark A.G."/>
            <person name="Waterman M.S."/>
            <person name="Eichler E.E."/>
            <person name="Adams M.D."/>
            <person name="Hunkapiller M.W."/>
            <person name="Myers E.W."/>
            <person name="Venter J.C."/>
        </authorList>
    </citation>
    <scope>NUCLEOTIDE SEQUENCE [LARGE SCALE GENOMIC DNA]</scope>
</reference>
<reference key="4">
    <citation type="journal article" date="2004" name="Genome Res.">
        <title>The status, quality, and expansion of the NIH full-length cDNA project: the Mammalian Gene Collection (MGC).</title>
        <authorList>
            <consortium name="The MGC Project Team"/>
        </authorList>
    </citation>
    <scope>NUCLEOTIDE SEQUENCE [LARGE SCALE MRNA] (ISOFORM 1)</scope>
    <source>
        <tissue>Eye</tissue>
        <tissue>Ovary</tissue>
    </source>
</reference>
<reference key="5">
    <citation type="journal article" date="2003" name="Biochem. J.">
        <title>Mammalian NADH diphosphatases of the Nudix family: cloning and characterization of the human peroxisomal NUDT12 protein.</title>
        <authorList>
            <person name="Abdelraheim S.R."/>
            <person name="Spiller D.G."/>
            <person name="McLennan A.G."/>
        </authorList>
    </citation>
    <scope>FUNCTION</scope>
    <scope>CATALYTIC ACTIVITY</scope>
    <scope>BIOPHYSICOCHEMICAL PROPERTIES</scope>
    <scope>SUBCELLULAR LOCATION</scope>
    <scope>MUTAGENESIS OF 460-PRO--LEU-462</scope>
</reference>
<reference key="6">
    <citation type="journal article" date="2019" name="Nat. Chem. Biol.">
        <title>Structural and mechanistic basis of mammalian Nudt12 RNA deNADding.</title>
        <authorList>
            <person name="Grudzien-Nogalska E."/>
            <person name="Wu Y."/>
            <person name="Jiao X."/>
            <person name="Cui H."/>
            <person name="Mateyak M.K."/>
            <person name="Hart R.P."/>
            <person name="Tong L."/>
            <person name="Kiledjian M."/>
        </authorList>
    </citation>
    <scope>FUNCTION</scope>
    <scope>CATALYTIC ACTIVITY</scope>
</reference>
<reference key="7">
    <citation type="journal article" date="2019" name="Cell Rep.">
        <title>Decapping Enzyme NUDT12 Partners with BLMH for Cytoplasmic Surveillance of NAD-Capped RNAs.</title>
        <authorList>
            <person name="Wu H."/>
            <person name="Li L."/>
            <person name="Chen K.M."/>
            <person name="Homolka D."/>
            <person name="Gos P."/>
            <person name="Fleury-Olela F."/>
            <person name="McCarthy A.A."/>
            <person name="Pillai R.S."/>
        </authorList>
    </citation>
    <scope>X-RAY CRYSTALLOGRAPHY (2.62 ANGSTROMS) OF 111-462 IN COMPLEX WITH 7-METHYL-GUANOSINE-5'-TRIPHOSPHATE</scope>
    <scope>FUNCTION</scope>
    <scope>CATALYTIC ACTIVITY</scope>
    <scope>COFACTOR</scope>
    <scope>SUBUNIT</scope>
    <scope>SUBCELLULAR LOCATION</scope>
    <scope>INTERACTION WITH BLMH</scope>
    <scope>METAL-ION BINDING</scope>
    <scope>MUTAGENESIS OF TYR-281; PHE-283; CYS-284; CYS-287; TYR-318; PHE-356; GLU-370; GLU-374; TYR-384 AND TRP-390</scope>
</reference>
<evidence type="ECO:0000250" key="1">
    <source>
        <dbReference type="UniProtKB" id="Q9DCN1"/>
    </source>
</evidence>
<evidence type="ECO:0000255" key="2">
    <source>
        <dbReference type="PROSITE-ProRule" id="PRU00794"/>
    </source>
</evidence>
<evidence type="ECO:0000269" key="3">
    <source>
    </source>
</evidence>
<evidence type="ECO:0000269" key="4">
    <source>
    </source>
</evidence>
<evidence type="ECO:0000269" key="5">
    <source>
    </source>
</evidence>
<evidence type="ECO:0000303" key="6">
    <source>
    </source>
</evidence>
<evidence type="ECO:0000305" key="7"/>
<evidence type="ECO:0000305" key="8">
    <source>
    </source>
</evidence>
<evidence type="ECO:0000305" key="9">
    <source>
    </source>
</evidence>
<evidence type="ECO:0000312" key="10">
    <source>
        <dbReference type="HGNC" id="HGNC:18826"/>
    </source>
</evidence>
<evidence type="ECO:0007744" key="11">
    <source>
        <dbReference type="PDB" id="6SCX"/>
    </source>
</evidence>
<evidence type="ECO:0007829" key="12">
    <source>
        <dbReference type="PDB" id="6SCX"/>
    </source>
</evidence>
<organism>
    <name type="scientific">Homo sapiens</name>
    <name type="common">Human</name>
    <dbReference type="NCBI Taxonomy" id="9606"/>
    <lineage>
        <taxon>Eukaryota</taxon>
        <taxon>Metazoa</taxon>
        <taxon>Chordata</taxon>
        <taxon>Craniata</taxon>
        <taxon>Vertebrata</taxon>
        <taxon>Euteleostomi</taxon>
        <taxon>Mammalia</taxon>
        <taxon>Eutheria</taxon>
        <taxon>Euarchontoglires</taxon>
        <taxon>Primates</taxon>
        <taxon>Haplorrhini</taxon>
        <taxon>Catarrhini</taxon>
        <taxon>Hominidae</taxon>
        <taxon>Homo</taxon>
    </lineage>
</organism>
<dbReference type="EC" id="3.6.1.-" evidence="4 5"/>
<dbReference type="EC" id="3.6.1.22" evidence="3"/>
<dbReference type="EMBL" id="AL136592">
    <property type="protein sequence ID" value="CAB66527.1"/>
    <property type="molecule type" value="mRNA"/>
</dbReference>
<dbReference type="EMBL" id="AK098066">
    <property type="protein sequence ID" value="BAG53574.1"/>
    <property type="molecule type" value="mRNA"/>
</dbReference>
<dbReference type="EMBL" id="AK304010">
    <property type="protein sequence ID" value="BAG64925.1"/>
    <property type="molecule type" value="mRNA"/>
</dbReference>
<dbReference type="EMBL" id="CH471086">
    <property type="protein sequence ID" value="EAW49073.1"/>
    <property type="molecule type" value="Genomic_DNA"/>
</dbReference>
<dbReference type="EMBL" id="BC026748">
    <property type="protein sequence ID" value="AAH26748.1"/>
    <property type="molecule type" value="mRNA"/>
</dbReference>
<dbReference type="EMBL" id="BC041099">
    <property type="protein sequence ID" value="AAH41099.1"/>
    <property type="molecule type" value="mRNA"/>
</dbReference>
<dbReference type="CCDS" id="CCDS4096.1">
    <molecule id="Q9BQG2-1"/>
</dbReference>
<dbReference type="CCDS" id="CCDS75284.1">
    <molecule id="Q9BQG2-2"/>
</dbReference>
<dbReference type="RefSeq" id="NP_001287670.1">
    <molecule id="Q9BQG2-2"/>
    <property type="nucleotide sequence ID" value="NM_001300741.2"/>
</dbReference>
<dbReference type="RefSeq" id="NP_113626.1">
    <molecule id="Q9BQG2-1"/>
    <property type="nucleotide sequence ID" value="NM_031438.4"/>
</dbReference>
<dbReference type="RefSeq" id="XP_005272152.1">
    <molecule id="Q9BQG2-1"/>
    <property type="nucleotide sequence ID" value="XM_005272095.2"/>
</dbReference>
<dbReference type="RefSeq" id="XP_005272154.1">
    <molecule id="Q9BQG2-2"/>
    <property type="nucleotide sequence ID" value="XM_005272097.4"/>
</dbReference>
<dbReference type="PDB" id="6SCX">
    <property type="method" value="X-ray"/>
    <property type="resolution" value="2.92 A"/>
    <property type="chains" value="A/B/C=111-462"/>
</dbReference>
<dbReference type="PDBsum" id="6SCX"/>
<dbReference type="SMR" id="Q9BQG2"/>
<dbReference type="BioGRID" id="123690">
    <property type="interactions" value="43"/>
</dbReference>
<dbReference type="FunCoup" id="Q9BQG2">
    <property type="interactions" value="863"/>
</dbReference>
<dbReference type="IntAct" id="Q9BQG2">
    <property type="interactions" value="30"/>
</dbReference>
<dbReference type="MINT" id="Q9BQG2"/>
<dbReference type="STRING" id="9606.ENSP00000230792"/>
<dbReference type="iPTMnet" id="Q9BQG2"/>
<dbReference type="PhosphoSitePlus" id="Q9BQG2"/>
<dbReference type="SwissPalm" id="Q9BQG2"/>
<dbReference type="BioMuta" id="NUDT12"/>
<dbReference type="DMDM" id="68565930"/>
<dbReference type="jPOST" id="Q9BQG2"/>
<dbReference type="MassIVE" id="Q9BQG2"/>
<dbReference type="PaxDb" id="9606-ENSP00000230792"/>
<dbReference type="PeptideAtlas" id="Q9BQG2"/>
<dbReference type="ProteomicsDB" id="78677"/>
<dbReference type="Pumba" id="Q9BQG2"/>
<dbReference type="ABCD" id="Q9BQG2">
    <property type="antibodies" value="4 sequenced antibodies"/>
</dbReference>
<dbReference type="Antibodypedia" id="25275">
    <property type="antibodies" value="198 antibodies from 25 providers"/>
</dbReference>
<dbReference type="DNASU" id="83594"/>
<dbReference type="Ensembl" id="ENST00000230792.7">
    <molecule id="Q9BQG2-1"/>
    <property type="protein sequence ID" value="ENSP00000230792.2"/>
    <property type="gene ID" value="ENSG00000112874.10"/>
</dbReference>
<dbReference type="Ensembl" id="ENST00000507423.1">
    <molecule id="Q9BQG2-2"/>
    <property type="protein sequence ID" value="ENSP00000424521.1"/>
    <property type="gene ID" value="ENSG00000112874.10"/>
</dbReference>
<dbReference type="GeneID" id="83594"/>
<dbReference type="KEGG" id="hsa:83594"/>
<dbReference type="MANE-Select" id="ENST00000230792.7">
    <property type="protein sequence ID" value="ENSP00000230792.2"/>
    <property type="RefSeq nucleotide sequence ID" value="NM_031438.4"/>
    <property type="RefSeq protein sequence ID" value="NP_113626.1"/>
</dbReference>
<dbReference type="UCSC" id="uc003koi.4">
    <molecule id="Q9BQG2-1"/>
    <property type="organism name" value="human"/>
</dbReference>
<dbReference type="AGR" id="HGNC:18826"/>
<dbReference type="CTD" id="83594"/>
<dbReference type="GeneCards" id="NUDT12"/>
<dbReference type="HGNC" id="HGNC:18826">
    <property type="gene designation" value="NUDT12"/>
</dbReference>
<dbReference type="HPA" id="ENSG00000112874">
    <property type="expression patterns" value="Low tissue specificity"/>
</dbReference>
<dbReference type="MIM" id="609232">
    <property type="type" value="gene"/>
</dbReference>
<dbReference type="neXtProt" id="NX_Q9BQG2"/>
<dbReference type="OpenTargets" id="ENSG00000112874"/>
<dbReference type="PharmGKB" id="PA38699"/>
<dbReference type="VEuPathDB" id="HostDB:ENSG00000112874"/>
<dbReference type="eggNOG" id="KOG0504">
    <property type="taxonomic scope" value="Eukaryota"/>
</dbReference>
<dbReference type="eggNOG" id="KOG3084">
    <property type="taxonomic scope" value="Eukaryota"/>
</dbReference>
<dbReference type="GeneTree" id="ENSGT00940000157592"/>
<dbReference type="InParanoid" id="Q9BQG2"/>
<dbReference type="OMA" id="CNTRTTL"/>
<dbReference type="OrthoDB" id="10249612at2759"/>
<dbReference type="PAN-GO" id="Q9BQG2">
    <property type="GO annotations" value="5 GO annotations based on evolutionary models"/>
</dbReference>
<dbReference type="PhylomeDB" id="Q9BQG2"/>
<dbReference type="TreeFam" id="TF106352"/>
<dbReference type="PathwayCommons" id="Q9BQG2"/>
<dbReference type="Reactome" id="R-HSA-197264">
    <property type="pathway name" value="Nicotinamide salvaging"/>
</dbReference>
<dbReference type="SignaLink" id="Q9BQG2"/>
<dbReference type="BioGRID-ORCS" id="83594">
    <property type="hits" value="8 hits in 1160 CRISPR screens"/>
</dbReference>
<dbReference type="ChiTaRS" id="NUDT12">
    <property type="organism name" value="human"/>
</dbReference>
<dbReference type="GeneWiki" id="NUDT12"/>
<dbReference type="GenomeRNAi" id="83594"/>
<dbReference type="Pharos" id="Q9BQG2">
    <property type="development level" value="Tbio"/>
</dbReference>
<dbReference type="PRO" id="PR:Q9BQG2"/>
<dbReference type="Proteomes" id="UP000005640">
    <property type="component" value="Chromosome 5"/>
</dbReference>
<dbReference type="RNAct" id="Q9BQG2">
    <property type="molecule type" value="protein"/>
</dbReference>
<dbReference type="Bgee" id="ENSG00000112874">
    <property type="expression patterns" value="Expressed in islet of Langerhans and 174 other cell types or tissues"/>
</dbReference>
<dbReference type="GO" id="GO:0005737">
    <property type="term" value="C:cytoplasm"/>
    <property type="evidence" value="ECO:0000314"/>
    <property type="project" value="MGI"/>
</dbReference>
<dbReference type="GO" id="GO:0005634">
    <property type="term" value="C:nucleus"/>
    <property type="evidence" value="ECO:0000314"/>
    <property type="project" value="LIFEdb"/>
</dbReference>
<dbReference type="GO" id="GO:0005782">
    <property type="term" value="C:peroxisomal matrix"/>
    <property type="evidence" value="ECO:0000304"/>
    <property type="project" value="Reactome"/>
</dbReference>
<dbReference type="GO" id="GO:0005777">
    <property type="term" value="C:peroxisome"/>
    <property type="evidence" value="ECO:0000314"/>
    <property type="project" value="UniProtKB"/>
</dbReference>
<dbReference type="GO" id="GO:0000287">
    <property type="term" value="F:magnesium ion binding"/>
    <property type="evidence" value="ECO:0000250"/>
    <property type="project" value="UniProtKB"/>
</dbReference>
<dbReference type="GO" id="GO:0000210">
    <property type="term" value="F:NAD+ diphosphatase activity"/>
    <property type="evidence" value="ECO:0000314"/>
    <property type="project" value="UniProtKB"/>
</dbReference>
<dbReference type="GO" id="GO:0035529">
    <property type="term" value="F:NADH pyrophosphatase activity"/>
    <property type="evidence" value="ECO:0000314"/>
    <property type="project" value="UniProtKB"/>
</dbReference>
<dbReference type="GO" id="GO:0010943">
    <property type="term" value="F:NADPH pyrophosphatase activity"/>
    <property type="evidence" value="ECO:0007669"/>
    <property type="project" value="RHEA"/>
</dbReference>
<dbReference type="GO" id="GO:1990174">
    <property type="term" value="F:phosphodiesterase decapping endonuclease activity"/>
    <property type="evidence" value="ECO:0000315"/>
    <property type="project" value="UniProtKB"/>
</dbReference>
<dbReference type="GO" id="GO:0110153">
    <property type="term" value="F:RNA NAD-cap (NMN-forming) hydrolase activity"/>
    <property type="evidence" value="ECO:0000250"/>
    <property type="project" value="UniProtKB"/>
</dbReference>
<dbReference type="GO" id="GO:0008270">
    <property type="term" value="F:zinc ion binding"/>
    <property type="evidence" value="ECO:0000250"/>
    <property type="project" value="UniProtKB"/>
</dbReference>
<dbReference type="GO" id="GO:0032922">
    <property type="term" value="P:circadian regulation of gene expression"/>
    <property type="evidence" value="ECO:0000250"/>
    <property type="project" value="UniProtKB"/>
</dbReference>
<dbReference type="GO" id="GO:0006402">
    <property type="term" value="P:mRNA catabolic process"/>
    <property type="evidence" value="ECO:0000250"/>
    <property type="project" value="UniProtKB"/>
</dbReference>
<dbReference type="GO" id="GO:0110156">
    <property type="term" value="P:mRNA methylguanosine-cap decapping"/>
    <property type="evidence" value="ECO:0000314"/>
    <property type="project" value="UniProtKB"/>
</dbReference>
<dbReference type="GO" id="GO:0019677">
    <property type="term" value="P:NAD catabolic process"/>
    <property type="evidence" value="ECO:0000314"/>
    <property type="project" value="UniProtKB"/>
</dbReference>
<dbReference type="GO" id="GO:0110155">
    <property type="term" value="P:NAD-cap decapping"/>
    <property type="evidence" value="ECO:0000314"/>
    <property type="project" value="UniProtKB"/>
</dbReference>
<dbReference type="GO" id="GO:0006734">
    <property type="term" value="P:NADH metabolic process"/>
    <property type="evidence" value="ECO:0000318"/>
    <property type="project" value="GO_Central"/>
</dbReference>
<dbReference type="GO" id="GO:0006742">
    <property type="term" value="P:NADP catabolic process"/>
    <property type="evidence" value="ECO:0000314"/>
    <property type="project" value="UniProtKB"/>
</dbReference>
<dbReference type="CDD" id="cd03429">
    <property type="entry name" value="NUDIX_NADH_pyrophosphatase_Nudt13"/>
    <property type="match status" value="1"/>
</dbReference>
<dbReference type="FunFam" id="1.25.40.20:FF:001067">
    <property type="entry name" value="Nudix (Nucleoside diphosphate linked moiety X)-type motif 12 (Predicted)"/>
    <property type="match status" value="1"/>
</dbReference>
<dbReference type="FunFam" id="3.90.79.10:FF:000023">
    <property type="entry name" value="Peroxisomal NADH pyrophosphatase NUDT12"/>
    <property type="match status" value="1"/>
</dbReference>
<dbReference type="FunFam" id="3.90.79.20:FF:000002">
    <property type="entry name" value="Peroxisomal NADH pyrophosphatase NUDT12"/>
    <property type="match status" value="1"/>
</dbReference>
<dbReference type="Gene3D" id="3.90.79.20">
    <property type="match status" value="1"/>
</dbReference>
<dbReference type="Gene3D" id="1.25.40.20">
    <property type="entry name" value="Ankyrin repeat-containing domain"/>
    <property type="match status" value="1"/>
</dbReference>
<dbReference type="Gene3D" id="3.90.79.10">
    <property type="entry name" value="Nucleoside Triphosphate Pyrophosphohydrolase"/>
    <property type="match status" value="1"/>
</dbReference>
<dbReference type="InterPro" id="IPR002110">
    <property type="entry name" value="Ankyrin_rpt"/>
</dbReference>
<dbReference type="InterPro" id="IPR036770">
    <property type="entry name" value="Ankyrin_rpt-contain_sf"/>
</dbReference>
<dbReference type="InterPro" id="IPR050241">
    <property type="entry name" value="NAD-cap_RNA_hydrolase_NudC"/>
</dbReference>
<dbReference type="InterPro" id="IPR015375">
    <property type="entry name" value="NADH_PPase-like_N"/>
</dbReference>
<dbReference type="InterPro" id="IPR049734">
    <property type="entry name" value="NudC-like_C"/>
</dbReference>
<dbReference type="InterPro" id="IPR015797">
    <property type="entry name" value="NUDIX_hydrolase-like_dom_sf"/>
</dbReference>
<dbReference type="InterPro" id="IPR020084">
    <property type="entry name" value="NUDIX_hydrolase_CS"/>
</dbReference>
<dbReference type="InterPro" id="IPR000086">
    <property type="entry name" value="NUDIX_hydrolase_dom"/>
</dbReference>
<dbReference type="InterPro" id="IPR015376">
    <property type="entry name" value="Znr_NADH_PPase"/>
</dbReference>
<dbReference type="NCBIfam" id="NF001299">
    <property type="entry name" value="PRK00241.1"/>
    <property type="match status" value="1"/>
</dbReference>
<dbReference type="PANTHER" id="PTHR42904:SF6">
    <property type="entry name" value="NAD-CAPPED RNA HYDROLASE NUDT12"/>
    <property type="match status" value="1"/>
</dbReference>
<dbReference type="PANTHER" id="PTHR42904">
    <property type="entry name" value="NUDIX HYDROLASE, NUDC SUBFAMILY"/>
    <property type="match status" value="1"/>
</dbReference>
<dbReference type="Pfam" id="PF12796">
    <property type="entry name" value="Ank_2"/>
    <property type="match status" value="1"/>
</dbReference>
<dbReference type="Pfam" id="PF00293">
    <property type="entry name" value="NUDIX"/>
    <property type="match status" value="1"/>
</dbReference>
<dbReference type="Pfam" id="PF09296">
    <property type="entry name" value="NUDIX-like"/>
    <property type="match status" value="1"/>
</dbReference>
<dbReference type="Pfam" id="PF09297">
    <property type="entry name" value="Zn_ribbon_NUD"/>
    <property type="match status" value="1"/>
</dbReference>
<dbReference type="SMART" id="SM00248">
    <property type="entry name" value="ANK"/>
    <property type="match status" value="3"/>
</dbReference>
<dbReference type="SUPFAM" id="SSF48403">
    <property type="entry name" value="Ankyrin repeat"/>
    <property type="match status" value="1"/>
</dbReference>
<dbReference type="SUPFAM" id="SSF55811">
    <property type="entry name" value="Nudix"/>
    <property type="match status" value="1"/>
</dbReference>
<dbReference type="PROSITE" id="PS50297">
    <property type="entry name" value="ANK_REP_REGION"/>
    <property type="match status" value="1"/>
</dbReference>
<dbReference type="PROSITE" id="PS50088">
    <property type="entry name" value="ANK_REPEAT"/>
    <property type="match status" value="1"/>
</dbReference>
<dbReference type="PROSITE" id="PS51462">
    <property type="entry name" value="NUDIX"/>
    <property type="match status" value="1"/>
</dbReference>
<dbReference type="PROSITE" id="PS00893">
    <property type="entry name" value="NUDIX_BOX"/>
    <property type="match status" value="1"/>
</dbReference>
<sequence length="462" mass="52076">MSSVKRSLKQEIVTQFHCSAAEGDIAKLTGILSHSPSLLNETSENGWTALMYAARNGHPEIVQFLLEKGCDRSIVNKSRQTALDIAVFWGYKHIANLLATAKGGKKPWFLTNEVEECENYFSKTLLDRKSEKRNNSDWLLAKESHPATVFILFSDLNPLVTLGGNKESFQQPEVRLCQLNYTDIKDYLAQPEKITLIFLGVELEIKDKLLNYAGEVPREEEDGLVAWFALGIDPIAAEEFKQRHENCYFLHPPMPALLQLKEKEAGVVAQARSVLAWHSRYKFCPTCGNATKIEEGGYKRLCLKEDCPSLNGVHNTSYPRVDPVVIMQVIHPDGTKCLLGRQKRFPPGMFTCLAGFIEPGETIEDAVRREVEEESGVKVGHVQYVACQPWPMPSSLMIGCLALAVSTEIKVDKNEIEDARWFTREQVLDVLTKGKQQAFFVPPSRAIAHQLIKHWIRINPNL</sequence>
<comment type="function">
    <text evidence="1 3 4 5">mRNA decapping enzyme that specifically removes the nicotinamide adenine dinucleotide (NAD) cap from a subset of mRNAs by hydrolyzing the diphosphate linkage to produce nicotinamide mononucleotide (NMN) and 5' monophosphate mRNA (PubMed:31101919, PubMed:31875550). The NAD-cap is present at the 5'-end of some RNAs; in contrast to the canonical N7 methylguanosine (m7G) cap, the NAD cap promotes mRNA decay (PubMed:31101919). Preferentially acts on NAD-capped transcripts in response to nutrient stress (PubMed:31101919). Also acts on free nicotinamide adenine dinucleotide molecules: hydrolyzes NAD(H) into NMN(H) and AMP, and NADPH into NMNH and 2',5'-ADP (PubMed:12790796). May act to regulate the concentration of peroxisomal nicotinamide nucleotide cofactors required for oxidative metabolism in this organelle (PubMed:12790796). Regulates the levels of circadian clock components PER1, PER2, PER3 and CRY2 in the liver (By similarity).</text>
</comment>
<comment type="catalytic activity">
    <reaction evidence="4 5">
        <text>a 5'-end NAD(+)-phospho-ribonucleoside in mRNA + H2O = a 5'-end phospho-adenosine-phospho-ribonucleoside in mRNA + beta-nicotinamide D-ribonucleotide + 2 H(+)</text>
        <dbReference type="Rhea" id="RHEA:60876"/>
        <dbReference type="Rhea" id="RHEA-COMP:15698"/>
        <dbReference type="Rhea" id="RHEA-COMP:15719"/>
        <dbReference type="ChEBI" id="CHEBI:14649"/>
        <dbReference type="ChEBI" id="CHEBI:15377"/>
        <dbReference type="ChEBI" id="CHEBI:15378"/>
        <dbReference type="ChEBI" id="CHEBI:144029"/>
        <dbReference type="ChEBI" id="CHEBI:144051"/>
    </reaction>
    <physiologicalReaction direction="left-to-right" evidence="9">
        <dbReference type="Rhea" id="RHEA:60877"/>
    </physiologicalReaction>
</comment>
<comment type="catalytic activity">
    <reaction evidence="3">
        <text>NAD(+) + H2O = beta-nicotinamide D-ribonucleotide + AMP + 2 H(+)</text>
        <dbReference type="Rhea" id="RHEA:11800"/>
        <dbReference type="ChEBI" id="CHEBI:14649"/>
        <dbReference type="ChEBI" id="CHEBI:15377"/>
        <dbReference type="ChEBI" id="CHEBI:15378"/>
        <dbReference type="ChEBI" id="CHEBI:57540"/>
        <dbReference type="ChEBI" id="CHEBI:456215"/>
        <dbReference type="EC" id="3.6.1.22"/>
    </reaction>
    <physiologicalReaction direction="left-to-right" evidence="3">
        <dbReference type="Rhea" id="RHEA:11801"/>
    </physiologicalReaction>
</comment>
<comment type="catalytic activity">
    <reaction evidence="3">
        <text>NADH + H2O = reduced beta-nicotinamide D-ribonucleotide + AMP + 2 H(+)</text>
        <dbReference type="Rhea" id="RHEA:48868"/>
        <dbReference type="ChEBI" id="CHEBI:15377"/>
        <dbReference type="ChEBI" id="CHEBI:15378"/>
        <dbReference type="ChEBI" id="CHEBI:57945"/>
        <dbReference type="ChEBI" id="CHEBI:90832"/>
        <dbReference type="ChEBI" id="CHEBI:456215"/>
        <dbReference type="EC" id="3.6.1.22"/>
    </reaction>
    <physiologicalReaction direction="left-to-right" evidence="3">
        <dbReference type="Rhea" id="RHEA:48869"/>
    </physiologicalReaction>
</comment>
<comment type="catalytic activity">
    <reaction evidence="3">
        <text>NADPH + H2O = reduced beta-nicotinamide D-ribonucleotide + adenosine 2',5'-bisphosphate + 2 H(+)</text>
        <dbReference type="Rhea" id="RHEA:60820"/>
        <dbReference type="ChEBI" id="CHEBI:15377"/>
        <dbReference type="ChEBI" id="CHEBI:15378"/>
        <dbReference type="ChEBI" id="CHEBI:57783"/>
        <dbReference type="ChEBI" id="CHEBI:90832"/>
        <dbReference type="ChEBI" id="CHEBI:194156"/>
    </reaction>
    <physiologicalReaction direction="left-to-right" evidence="3">
        <dbReference type="Rhea" id="RHEA:60821"/>
    </physiologicalReaction>
</comment>
<comment type="cofactor">
    <cofactor evidence="9">
        <name>Mg(2+)</name>
        <dbReference type="ChEBI" id="CHEBI:18420"/>
    </cofactor>
    <text evidence="9">Binds 3 Mg(2+) ions per subunit.</text>
</comment>
<comment type="cofactor">
    <cofactor evidence="9">
        <name>Zn(2+)</name>
        <dbReference type="ChEBI" id="CHEBI:29105"/>
    </cofactor>
    <text evidence="9">Binds 1 zinc ion per subunit.</text>
</comment>
<comment type="biophysicochemical properties">
    <kinetics>
        <KM evidence="3">11 uM for NADH</KM>
        <KM evidence="3">16 uM for NADPH</KM>
        <KM evidence="3">190 uM for NAD</KM>
    </kinetics>
    <phDependence>
        <text evidence="3">Optimum pH is 8-9.</text>
    </phDependence>
</comment>
<comment type="subunit">
    <text evidence="5">Homodimer (PubMed:31875550). Homodimerization is essential for its catalytic activity and protein stability (PubMed:31875550). Interacts (via ANK repeats) with BLMH (PubMed:31875550).</text>
</comment>
<comment type="interaction">
    <interactant intactId="EBI-10230612">
        <id>Q9BQG2</id>
    </interactant>
    <interactant intactId="EBI-718504">
        <id>Q13867</id>
        <label>BLMH</label>
    </interactant>
    <organismsDiffer>false</organismsDiffer>
    <experiments>11</experiments>
</comment>
<comment type="subcellular location">
    <subcellularLocation>
        <location evidence="3">Cytoplasm</location>
    </subcellularLocation>
    <subcellularLocation>
        <location evidence="3">Peroxisome</location>
    </subcellularLocation>
    <subcellularLocation>
        <location evidence="5">Cytoplasmic granule</location>
    </subcellularLocation>
    <text evidence="5">Localizes to cytoplasmic granules in the presence of BLMH.</text>
</comment>
<comment type="alternative products">
    <event type="alternative splicing"/>
    <isoform>
        <id>Q9BQG2-1</id>
        <name>1</name>
        <sequence type="displayed"/>
    </isoform>
    <isoform>
        <id>Q9BQG2-2</id>
        <name>2</name>
        <sequence type="described" ref="VSP_060395"/>
    </isoform>
</comment>
<comment type="similarity">
    <text evidence="7">Belongs to the Nudix hydrolase family. NudC subfamily.</text>
</comment>
<keyword id="KW-0002">3D-structure</keyword>
<keyword id="KW-0025">Alternative splicing</keyword>
<keyword id="KW-0040">ANK repeat</keyword>
<keyword id="KW-0963">Cytoplasm</keyword>
<keyword id="KW-0378">Hydrolase</keyword>
<keyword id="KW-0460">Magnesium</keyword>
<keyword id="KW-0479">Metal-binding</keyword>
<keyword id="KW-0520">NAD</keyword>
<keyword id="KW-0521">NADP</keyword>
<keyword id="KW-0576">Peroxisome</keyword>
<keyword id="KW-1267">Proteomics identification</keyword>
<keyword id="KW-1185">Reference proteome</keyword>
<keyword id="KW-0677">Repeat</keyword>
<keyword id="KW-0862">Zinc</keyword>
<protein>
    <recommendedName>
        <fullName evidence="7">NAD-capped RNA hydrolase NUDT12</fullName>
        <shortName evidence="7">DeNADding enzyme NUDT12</shortName>
        <ecNumber evidence="4 5">3.6.1.-</ecNumber>
    </recommendedName>
    <alternativeName>
        <fullName evidence="7">NADH pyrophosphatase NUDT12</fullName>
        <ecNumber evidence="3">3.6.1.22</ecNumber>
    </alternativeName>
    <alternativeName>
        <fullName evidence="7">Nucleoside diphosphate-linked moiety X motif 12</fullName>
        <shortName evidence="7">Nudix motif 12</shortName>
    </alternativeName>
</protein>
<gene>
    <name evidence="6 10" type="primary">NUDT12</name>
</gene>
<accession>Q9BQG2</accession>
<accession>B3KUW2</accession>
<accession>B4E1W3</accession>
<accession>Q8TAL7</accession>
<name>NUD12_HUMAN</name>